<dbReference type="EC" id="7.1.1.-" evidence="1"/>
<dbReference type="EMBL" id="BX640448">
    <property type="protein sequence ID" value="CAE35805.1"/>
    <property type="molecule type" value="Genomic_DNA"/>
</dbReference>
<dbReference type="RefSeq" id="WP_003813920.1">
    <property type="nucleotide sequence ID" value="NC_002927.3"/>
</dbReference>
<dbReference type="SMR" id="Q7WCU9"/>
<dbReference type="GeneID" id="93205164"/>
<dbReference type="KEGG" id="bbr:BB3831"/>
<dbReference type="eggNOG" id="COG0713">
    <property type="taxonomic scope" value="Bacteria"/>
</dbReference>
<dbReference type="HOGENOM" id="CLU_144724_2_0_4"/>
<dbReference type="Proteomes" id="UP000001027">
    <property type="component" value="Chromosome"/>
</dbReference>
<dbReference type="GO" id="GO:0030964">
    <property type="term" value="C:NADH dehydrogenase complex"/>
    <property type="evidence" value="ECO:0007669"/>
    <property type="project" value="TreeGrafter"/>
</dbReference>
<dbReference type="GO" id="GO:0005886">
    <property type="term" value="C:plasma membrane"/>
    <property type="evidence" value="ECO:0007669"/>
    <property type="project" value="UniProtKB-SubCell"/>
</dbReference>
<dbReference type="GO" id="GO:0050136">
    <property type="term" value="F:NADH:ubiquinone reductase (non-electrogenic) activity"/>
    <property type="evidence" value="ECO:0007669"/>
    <property type="project" value="UniProtKB-UniRule"/>
</dbReference>
<dbReference type="GO" id="GO:0048038">
    <property type="term" value="F:quinone binding"/>
    <property type="evidence" value="ECO:0007669"/>
    <property type="project" value="UniProtKB-KW"/>
</dbReference>
<dbReference type="GO" id="GO:0042773">
    <property type="term" value="P:ATP synthesis coupled electron transport"/>
    <property type="evidence" value="ECO:0007669"/>
    <property type="project" value="InterPro"/>
</dbReference>
<dbReference type="FunFam" id="1.10.287.3510:FF:000001">
    <property type="entry name" value="NADH-quinone oxidoreductase subunit K"/>
    <property type="match status" value="1"/>
</dbReference>
<dbReference type="Gene3D" id="1.10.287.3510">
    <property type="match status" value="1"/>
</dbReference>
<dbReference type="HAMAP" id="MF_01456">
    <property type="entry name" value="NDH1_NuoK"/>
    <property type="match status" value="1"/>
</dbReference>
<dbReference type="InterPro" id="IPR001133">
    <property type="entry name" value="NADH_UbQ_OxRdtase_chain4L/K"/>
</dbReference>
<dbReference type="InterPro" id="IPR039428">
    <property type="entry name" value="NUOK/Mnh_C1-like"/>
</dbReference>
<dbReference type="NCBIfam" id="NF004320">
    <property type="entry name" value="PRK05715.1-2"/>
    <property type="match status" value="1"/>
</dbReference>
<dbReference type="NCBIfam" id="NF004321">
    <property type="entry name" value="PRK05715.1-3"/>
    <property type="match status" value="1"/>
</dbReference>
<dbReference type="NCBIfam" id="NF004323">
    <property type="entry name" value="PRK05715.1-5"/>
    <property type="match status" value="1"/>
</dbReference>
<dbReference type="PANTHER" id="PTHR11434:SF21">
    <property type="entry name" value="NADH DEHYDROGENASE SUBUNIT 4L-RELATED"/>
    <property type="match status" value="1"/>
</dbReference>
<dbReference type="PANTHER" id="PTHR11434">
    <property type="entry name" value="NADH-UBIQUINONE OXIDOREDUCTASE SUBUNIT ND4L"/>
    <property type="match status" value="1"/>
</dbReference>
<dbReference type="Pfam" id="PF00420">
    <property type="entry name" value="Oxidored_q2"/>
    <property type="match status" value="1"/>
</dbReference>
<accession>Q7WCU9</accession>
<name>NUOK_BORBR</name>
<proteinExistence type="inferred from homology"/>
<comment type="function">
    <text evidence="1">NDH-1 shuttles electrons from NADH, via FMN and iron-sulfur (Fe-S) centers, to quinones in the respiratory chain. The immediate electron acceptor for the enzyme in this species is believed to be ubiquinone. Couples the redox reaction to proton translocation (for every two electrons transferred, four hydrogen ions are translocated across the cytoplasmic membrane), and thus conserves the redox energy in a proton gradient.</text>
</comment>
<comment type="catalytic activity">
    <reaction evidence="1">
        <text>a quinone + NADH + 5 H(+)(in) = a quinol + NAD(+) + 4 H(+)(out)</text>
        <dbReference type="Rhea" id="RHEA:57888"/>
        <dbReference type="ChEBI" id="CHEBI:15378"/>
        <dbReference type="ChEBI" id="CHEBI:24646"/>
        <dbReference type="ChEBI" id="CHEBI:57540"/>
        <dbReference type="ChEBI" id="CHEBI:57945"/>
        <dbReference type="ChEBI" id="CHEBI:132124"/>
    </reaction>
</comment>
<comment type="subunit">
    <text evidence="1">NDH-1 is composed of 14 different subunits. Subunits NuoA, H, J, K, L, M, N constitute the membrane sector of the complex.</text>
</comment>
<comment type="subcellular location">
    <subcellularLocation>
        <location evidence="1">Cell inner membrane</location>
        <topology evidence="1">Multi-pass membrane protein</topology>
    </subcellularLocation>
</comment>
<comment type="similarity">
    <text evidence="1">Belongs to the complex I subunit 4L family.</text>
</comment>
<feature type="chain" id="PRO_0000389963" description="NADH-quinone oxidoreductase subunit K">
    <location>
        <begin position="1"/>
        <end position="102"/>
    </location>
</feature>
<feature type="transmembrane region" description="Helical" evidence="1">
    <location>
        <begin position="5"/>
        <end position="25"/>
    </location>
</feature>
<feature type="transmembrane region" description="Helical" evidence="1">
    <location>
        <begin position="31"/>
        <end position="51"/>
    </location>
</feature>
<feature type="transmembrane region" description="Helical" evidence="1">
    <location>
        <begin position="62"/>
        <end position="82"/>
    </location>
</feature>
<evidence type="ECO:0000255" key="1">
    <source>
        <dbReference type="HAMAP-Rule" id="MF_01456"/>
    </source>
</evidence>
<sequence length="102" mass="11228">MTLTLAHYLILGAILFAIGIFGIFLNRRNLIILLMSIELVLLAVNMNFVAFSSWFGDIAGQVFVFFILTVAAAEAAIGLAILVLLFRNLNTINVDELDRLKG</sequence>
<reference key="1">
    <citation type="journal article" date="2003" name="Nat. Genet.">
        <title>Comparative analysis of the genome sequences of Bordetella pertussis, Bordetella parapertussis and Bordetella bronchiseptica.</title>
        <authorList>
            <person name="Parkhill J."/>
            <person name="Sebaihia M."/>
            <person name="Preston A."/>
            <person name="Murphy L.D."/>
            <person name="Thomson N.R."/>
            <person name="Harris D.E."/>
            <person name="Holden M.T.G."/>
            <person name="Churcher C.M."/>
            <person name="Bentley S.D."/>
            <person name="Mungall K.L."/>
            <person name="Cerdeno-Tarraga A.-M."/>
            <person name="Temple L."/>
            <person name="James K.D."/>
            <person name="Harris B."/>
            <person name="Quail M.A."/>
            <person name="Achtman M."/>
            <person name="Atkin R."/>
            <person name="Baker S."/>
            <person name="Basham D."/>
            <person name="Bason N."/>
            <person name="Cherevach I."/>
            <person name="Chillingworth T."/>
            <person name="Collins M."/>
            <person name="Cronin A."/>
            <person name="Davis P."/>
            <person name="Doggett J."/>
            <person name="Feltwell T."/>
            <person name="Goble A."/>
            <person name="Hamlin N."/>
            <person name="Hauser H."/>
            <person name="Holroyd S."/>
            <person name="Jagels K."/>
            <person name="Leather S."/>
            <person name="Moule S."/>
            <person name="Norberczak H."/>
            <person name="O'Neil S."/>
            <person name="Ormond D."/>
            <person name="Price C."/>
            <person name="Rabbinowitsch E."/>
            <person name="Rutter S."/>
            <person name="Sanders M."/>
            <person name="Saunders D."/>
            <person name="Seeger K."/>
            <person name="Sharp S."/>
            <person name="Simmonds M."/>
            <person name="Skelton J."/>
            <person name="Squares R."/>
            <person name="Squares S."/>
            <person name="Stevens K."/>
            <person name="Unwin L."/>
            <person name="Whitehead S."/>
            <person name="Barrell B.G."/>
            <person name="Maskell D.J."/>
        </authorList>
    </citation>
    <scope>NUCLEOTIDE SEQUENCE [LARGE SCALE GENOMIC DNA]</scope>
    <source>
        <strain>ATCC BAA-588 / NCTC 13252 / RB50</strain>
    </source>
</reference>
<keyword id="KW-0997">Cell inner membrane</keyword>
<keyword id="KW-1003">Cell membrane</keyword>
<keyword id="KW-0472">Membrane</keyword>
<keyword id="KW-0520">NAD</keyword>
<keyword id="KW-0874">Quinone</keyword>
<keyword id="KW-1278">Translocase</keyword>
<keyword id="KW-0812">Transmembrane</keyword>
<keyword id="KW-1133">Transmembrane helix</keyword>
<keyword id="KW-0813">Transport</keyword>
<keyword id="KW-0830">Ubiquinone</keyword>
<protein>
    <recommendedName>
        <fullName evidence="1">NADH-quinone oxidoreductase subunit K</fullName>
        <ecNumber evidence="1">7.1.1.-</ecNumber>
    </recommendedName>
    <alternativeName>
        <fullName evidence="1">NADH dehydrogenase I subunit K</fullName>
    </alternativeName>
    <alternativeName>
        <fullName evidence="1">NDH-1 subunit K</fullName>
    </alternativeName>
</protein>
<organism>
    <name type="scientific">Bordetella bronchiseptica (strain ATCC BAA-588 / NCTC 13252 / RB50)</name>
    <name type="common">Alcaligenes bronchisepticus</name>
    <dbReference type="NCBI Taxonomy" id="257310"/>
    <lineage>
        <taxon>Bacteria</taxon>
        <taxon>Pseudomonadati</taxon>
        <taxon>Pseudomonadota</taxon>
        <taxon>Betaproteobacteria</taxon>
        <taxon>Burkholderiales</taxon>
        <taxon>Alcaligenaceae</taxon>
        <taxon>Bordetella</taxon>
    </lineage>
</organism>
<gene>
    <name evidence="1" type="primary">nuoK</name>
    <name type="ordered locus">BB3831</name>
</gene>